<comment type="function">
    <text evidence="1">Accelerates the degradation of transcripts by removing pyrophosphate from the 5'-end of triphosphorylated RNA, leading to a more labile monophosphorylated state that can stimulate subsequent ribonuclease cleavage.</text>
</comment>
<comment type="cofactor">
    <cofactor evidence="1">
        <name>a divalent metal cation</name>
        <dbReference type="ChEBI" id="CHEBI:60240"/>
    </cofactor>
</comment>
<comment type="similarity">
    <text evidence="1">Belongs to the Nudix hydrolase family. RppH subfamily.</text>
</comment>
<evidence type="ECO:0000255" key="1">
    <source>
        <dbReference type="HAMAP-Rule" id="MF_00298"/>
    </source>
</evidence>
<reference key="1">
    <citation type="journal article" date="2006" name="J. Bacteriol.">
        <title>Complete genome sequence of Yersinia pestis strains Antiqua and Nepal516: evidence of gene reduction in an emerging pathogen.</title>
        <authorList>
            <person name="Chain P.S.G."/>
            <person name="Hu P."/>
            <person name="Malfatti S.A."/>
            <person name="Radnedge L."/>
            <person name="Larimer F."/>
            <person name="Vergez L.M."/>
            <person name="Worsham P."/>
            <person name="Chu M.C."/>
            <person name="Andersen G.L."/>
        </authorList>
    </citation>
    <scope>NUCLEOTIDE SEQUENCE [LARGE SCALE GENOMIC DNA]</scope>
    <source>
        <strain>Antiqua</strain>
    </source>
</reference>
<organism>
    <name type="scientific">Yersinia pestis bv. Antiqua (strain Antiqua)</name>
    <dbReference type="NCBI Taxonomy" id="360102"/>
    <lineage>
        <taxon>Bacteria</taxon>
        <taxon>Pseudomonadati</taxon>
        <taxon>Pseudomonadota</taxon>
        <taxon>Gammaproteobacteria</taxon>
        <taxon>Enterobacterales</taxon>
        <taxon>Yersiniaceae</taxon>
        <taxon>Yersinia</taxon>
    </lineage>
</organism>
<dbReference type="EC" id="3.6.1.-" evidence="1"/>
<dbReference type="EMBL" id="CP000308">
    <property type="protein sequence ID" value="ABG12450.1"/>
    <property type="molecule type" value="Genomic_DNA"/>
</dbReference>
<dbReference type="RefSeq" id="WP_002211381.1">
    <property type="nucleotide sequence ID" value="NZ_CP009906.1"/>
</dbReference>
<dbReference type="SMR" id="Q1CAS2"/>
<dbReference type="GeneID" id="57973848"/>
<dbReference type="KEGG" id="ypa:YPA_0482"/>
<dbReference type="Proteomes" id="UP000001971">
    <property type="component" value="Chromosome"/>
</dbReference>
<dbReference type="GO" id="GO:0005737">
    <property type="term" value="C:cytoplasm"/>
    <property type="evidence" value="ECO:0007669"/>
    <property type="project" value="TreeGrafter"/>
</dbReference>
<dbReference type="GO" id="GO:0034353">
    <property type="term" value="F:mRNA 5'-diphosphatase activity"/>
    <property type="evidence" value="ECO:0007669"/>
    <property type="project" value="TreeGrafter"/>
</dbReference>
<dbReference type="GO" id="GO:0006402">
    <property type="term" value="P:mRNA catabolic process"/>
    <property type="evidence" value="ECO:0007669"/>
    <property type="project" value="TreeGrafter"/>
</dbReference>
<dbReference type="CDD" id="cd03671">
    <property type="entry name" value="NUDIX_Ap4A_hydrolase_plant_like"/>
    <property type="match status" value="1"/>
</dbReference>
<dbReference type="FunFam" id="3.90.79.10:FF:000001">
    <property type="entry name" value="RNA pyrophosphohydrolase"/>
    <property type="match status" value="1"/>
</dbReference>
<dbReference type="Gene3D" id="3.90.79.10">
    <property type="entry name" value="Nucleoside Triphosphate Pyrophosphohydrolase"/>
    <property type="match status" value="1"/>
</dbReference>
<dbReference type="HAMAP" id="MF_00298">
    <property type="entry name" value="Nudix_RppH"/>
    <property type="match status" value="1"/>
</dbReference>
<dbReference type="InterPro" id="IPR020476">
    <property type="entry name" value="Nudix_hydrolase"/>
</dbReference>
<dbReference type="InterPro" id="IPR015797">
    <property type="entry name" value="NUDIX_hydrolase-like_dom_sf"/>
</dbReference>
<dbReference type="InterPro" id="IPR020084">
    <property type="entry name" value="NUDIX_hydrolase_CS"/>
</dbReference>
<dbReference type="InterPro" id="IPR000086">
    <property type="entry name" value="NUDIX_hydrolase_dom"/>
</dbReference>
<dbReference type="InterPro" id="IPR022927">
    <property type="entry name" value="RppH"/>
</dbReference>
<dbReference type="NCBIfam" id="NF001934">
    <property type="entry name" value="PRK00714.1-1"/>
    <property type="match status" value="1"/>
</dbReference>
<dbReference type="NCBIfam" id="NF001937">
    <property type="entry name" value="PRK00714.1-4"/>
    <property type="match status" value="1"/>
</dbReference>
<dbReference type="NCBIfam" id="NF001938">
    <property type="entry name" value="PRK00714.1-5"/>
    <property type="match status" value="1"/>
</dbReference>
<dbReference type="PANTHER" id="PTHR23114">
    <property type="entry name" value="M7GPPPN-MRNA HYDROLASE"/>
    <property type="match status" value="1"/>
</dbReference>
<dbReference type="PANTHER" id="PTHR23114:SF17">
    <property type="entry name" value="M7GPPPN-MRNA HYDROLASE"/>
    <property type="match status" value="1"/>
</dbReference>
<dbReference type="Pfam" id="PF00293">
    <property type="entry name" value="NUDIX"/>
    <property type="match status" value="1"/>
</dbReference>
<dbReference type="PRINTS" id="PR00502">
    <property type="entry name" value="NUDIXFAMILY"/>
</dbReference>
<dbReference type="SUPFAM" id="SSF55811">
    <property type="entry name" value="Nudix"/>
    <property type="match status" value="1"/>
</dbReference>
<dbReference type="PROSITE" id="PS51462">
    <property type="entry name" value="NUDIX"/>
    <property type="match status" value="1"/>
</dbReference>
<dbReference type="PROSITE" id="PS00893">
    <property type="entry name" value="NUDIX_BOX"/>
    <property type="match status" value="1"/>
</dbReference>
<protein>
    <recommendedName>
        <fullName evidence="1">RNA pyrophosphohydrolase</fullName>
        <ecNumber evidence="1">3.6.1.-</ecNumber>
    </recommendedName>
    <alternativeName>
        <fullName evidence="1">(Di)nucleoside polyphosphate hydrolase</fullName>
    </alternativeName>
</protein>
<feature type="chain" id="PRO_1000022009" description="RNA pyrophosphohydrolase">
    <location>
        <begin position="1"/>
        <end position="175"/>
    </location>
</feature>
<feature type="domain" description="Nudix hydrolase" evidence="1">
    <location>
        <begin position="6"/>
        <end position="149"/>
    </location>
</feature>
<feature type="short sequence motif" description="Nudix box">
    <location>
        <begin position="38"/>
        <end position="59"/>
    </location>
</feature>
<name>RPPH_YERPA</name>
<keyword id="KW-0378">Hydrolase</keyword>
<gene>
    <name evidence="1" type="primary">rppH</name>
    <name evidence="1" type="synonym">nudH</name>
    <name type="ordered locus">YPA_0482</name>
</gene>
<proteinExistence type="inferred from homology"/>
<sequence length="175" mass="20893">MIDDDGYRPNVGIVICNRQGEVLWARRYGQHSWQFPQGGINPGETPEQAMYRELFEEVGLNKKDVRILASTRNWLRYKLPKRLVRWDTKPVCIGQKQRWFLLQLMCNEAEINMQRSSTPEFDGWRWVSYWYPVRQVVSFKRDVYRRVMKEFAATVMPVQEVAPPRVPPAYRRKRG</sequence>
<accession>Q1CAS2</accession>